<sequence length="228" mass="25725">GIVRYTKMKTATNIYIFNLALADALATSTLPFQSAKYLMETWPFGELLCKAVLSIDYYNMFTSIFTLTMMSVDRYIAVCHPVKALDFRTPAKAKLINICIWVLASGVGVPIMVMAVTRPRDGAVVCMLQFPSPSWYWDTVTKICVFLFAFVVPILVITVCYGLMLLRLRSVRLLSGSKEKDRSLRRITRMVLVVVGAFVVCWAPIHIFVIVWTLVDIDRRDPLVVAAL</sequence>
<dbReference type="EMBL" id="U71149">
    <property type="protein sequence ID" value="AAB39694.1"/>
    <property type="molecule type" value="mRNA"/>
</dbReference>
<dbReference type="SMR" id="P79291"/>
<dbReference type="STRING" id="9823.ENSSSCP00000024665"/>
<dbReference type="BindingDB" id="P79291"/>
<dbReference type="ChEMBL" id="CHEMBL4103"/>
<dbReference type="PaxDb" id="9823-ENSSSCP00000024665"/>
<dbReference type="eggNOG" id="KOG3656">
    <property type="taxonomic scope" value="Eukaryota"/>
</dbReference>
<dbReference type="HOGENOM" id="CLU_009579_8_1_1"/>
<dbReference type="InParanoid" id="P79291"/>
<dbReference type="Proteomes" id="UP000008227">
    <property type="component" value="Unplaced"/>
</dbReference>
<dbReference type="Proteomes" id="UP000314985">
    <property type="component" value="Unplaced"/>
</dbReference>
<dbReference type="Proteomes" id="UP000694570">
    <property type="component" value="Unplaced"/>
</dbReference>
<dbReference type="Proteomes" id="UP000694571">
    <property type="component" value="Unplaced"/>
</dbReference>
<dbReference type="Proteomes" id="UP000694720">
    <property type="component" value="Unplaced"/>
</dbReference>
<dbReference type="Proteomes" id="UP000694722">
    <property type="component" value="Unplaced"/>
</dbReference>
<dbReference type="Proteomes" id="UP000694723">
    <property type="component" value="Unplaced"/>
</dbReference>
<dbReference type="Proteomes" id="UP000694724">
    <property type="component" value="Unplaced"/>
</dbReference>
<dbReference type="Proteomes" id="UP000694725">
    <property type="component" value="Unplaced"/>
</dbReference>
<dbReference type="Proteomes" id="UP000694726">
    <property type="component" value="Unplaced"/>
</dbReference>
<dbReference type="Proteomes" id="UP000694727">
    <property type="component" value="Unplaced"/>
</dbReference>
<dbReference type="Proteomes" id="UP000694728">
    <property type="component" value="Unplaced"/>
</dbReference>
<dbReference type="GO" id="GO:0043005">
    <property type="term" value="C:neuron projection"/>
    <property type="evidence" value="ECO:0000318"/>
    <property type="project" value="GO_Central"/>
</dbReference>
<dbReference type="GO" id="GO:0005886">
    <property type="term" value="C:plasma membrane"/>
    <property type="evidence" value="ECO:0000318"/>
    <property type="project" value="GO_Central"/>
</dbReference>
<dbReference type="GO" id="GO:0038046">
    <property type="term" value="F:G protein-coupled enkephalin receptor activity"/>
    <property type="evidence" value="ECO:0000318"/>
    <property type="project" value="GO_Central"/>
</dbReference>
<dbReference type="GO" id="GO:0042923">
    <property type="term" value="F:neuropeptide binding"/>
    <property type="evidence" value="ECO:0000318"/>
    <property type="project" value="GO_Central"/>
</dbReference>
<dbReference type="GO" id="GO:0038003">
    <property type="term" value="P:G protein-coupled opioid receptor signaling pathway"/>
    <property type="evidence" value="ECO:0000318"/>
    <property type="project" value="GO_Central"/>
</dbReference>
<dbReference type="GO" id="GO:0007218">
    <property type="term" value="P:neuropeptide signaling pathway"/>
    <property type="evidence" value="ECO:0000318"/>
    <property type="project" value="GO_Central"/>
</dbReference>
<dbReference type="GO" id="GO:0007200">
    <property type="term" value="P:phospholipase C-activating G protein-coupled receptor signaling pathway"/>
    <property type="evidence" value="ECO:0000250"/>
    <property type="project" value="UniProtKB"/>
</dbReference>
<dbReference type="Gene3D" id="1.20.1070.10">
    <property type="entry name" value="Rhodopsin 7-helix transmembrane proteins"/>
    <property type="match status" value="1"/>
</dbReference>
<dbReference type="InterPro" id="IPR000321">
    <property type="entry name" value="Delta_opi_rcpt"/>
</dbReference>
<dbReference type="InterPro" id="IPR000276">
    <property type="entry name" value="GPCR_Rhodpsn"/>
</dbReference>
<dbReference type="InterPro" id="IPR017452">
    <property type="entry name" value="GPCR_Rhodpsn_7TM"/>
</dbReference>
<dbReference type="InterPro" id="IPR001418">
    <property type="entry name" value="Opioid_rcpt"/>
</dbReference>
<dbReference type="PANTHER" id="PTHR24229:SF2">
    <property type="entry name" value="DELTA-TYPE OPIOID RECEPTOR"/>
    <property type="match status" value="1"/>
</dbReference>
<dbReference type="PANTHER" id="PTHR24229">
    <property type="entry name" value="NEUROPEPTIDES RECEPTOR"/>
    <property type="match status" value="1"/>
</dbReference>
<dbReference type="Pfam" id="PF00001">
    <property type="entry name" value="7tm_1"/>
    <property type="match status" value="1"/>
</dbReference>
<dbReference type="PRINTS" id="PR00525">
    <property type="entry name" value="DELTAOPIOIDR"/>
</dbReference>
<dbReference type="PRINTS" id="PR00237">
    <property type="entry name" value="GPCRRHODOPSN"/>
</dbReference>
<dbReference type="PRINTS" id="PR00384">
    <property type="entry name" value="OPIOIDR"/>
</dbReference>
<dbReference type="SUPFAM" id="SSF81321">
    <property type="entry name" value="Family A G protein-coupled receptor-like"/>
    <property type="match status" value="1"/>
</dbReference>
<dbReference type="PROSITE" id="PS00237">
    <property type="entry name" value="G_PROTEIN_RECEP_F1_1"/>
    <property type="match status" value="1"/>
</dbReference>
<dbReference type="PROSITE" id="PS50262">
    <property type="entry name" value="G_PROTEIN_RECEP_F1_2"/>
    <property type="match status" value="1"/>
</dbReference>
<evidence type="ECO:0000250" key="1"/>
<evidence type="ECO:0000250" key="2">
    <source>
        <dbReference type="UniProtKB" id="P32300"/>
    </source>
</evidence>
<evidence type="ECO:0000250" key="3">
    <source>
        <dbReference type="UniProtKB" id="P41143"/>
    </source>
</evidence>
<evidence type="ECO:0000255" key="4">
    <source>
        <dbReference type="PROSITE-ProRule" id="PRU00521"/>
    </source>
</evidence>
<evidence type="ECO:0000269" key="5">
    <source>
    </source>
</evidence>
<name>OPRD_PIG</name>
<organism>
    <name type="scientific">Sus scrofa</name>
    <name type="common">Pig</name>
    <dbReference type="NCBI Taxonomy" id="9823"/>
    <lineage>
        <taxon>Eukaryota</taxon>
        <taxon>Metazoa</taxon>
        <taxon>Chordata</taxon>
        <taxon>Craniata</taxon>
        <taxon>Vertebrata</taxon>
        <taxon>Euteleostomi</taxon>
        <taxon>Mammalia</taxon>
        <taxon>Eutheria</taxon>
        <taxon>Laurasiatheria</taxon>
        <taxon>Artiodactyla</taxon>
        <taxon>Suina</taxon>
        <taxon>Suidae</taxon>
        <taxon>Sus</taxon>
    </lineage>
</organism>
<reference key="1">
    <citation type="journal article" date="1998" name="Dig. Dis. Sci.">
        <title>Delta-opioid receptor mRNA expression and immunohistochemical localization in porcine ileum.</title>
        <authorList>
            <person name="Brown D.R."/>
            <person name="Poonyachoti S."/>
            <person name="Osinski M.A."/>
            <person name="Kowalski T.R."/>
            <person name="Pampusch M.S."/>
            <person name="Elde R.P."/>
            <person name="Murtaugh M.P."/>
        </authorList>
    </citation>
    <scope>NUCLEOTIDE SEQUENCE [MRNA]</scope>
    <scope>FUNCTION</scope>
    <scope>TISSUE SPECIFICITY</scope>
    <source>
        <tissue>Brain cortex</tissue>
    </source>
</reference>
<feature type="chain" id="PRO_0000069964" description="Delta-type opioid receptor">
    <location>
        <begin position="1" status="less than"/>
        <end position="228" status="greater than"/>
    </location>
</feature>
<feature type="transmembrane region" description="Helical; Name=1" evidence="1">
    <location>
        <begin position="1" status="less than"/>
        <end position="3"/>
    </location>
</feature>
<feature type="topological domain" description="Cytoplasmic" evidence="1">
    <location>
        <begin position="4"/>
        <end position="13"/>
    </location>
</feature>
<feature type="transmembrane region" description="Helical; Name=2" evidence="1">
    <location>
        <begin position="14"/>
        <end position="38"/>
    </location>
</feature>
<feature type="topological domain" description="Extracellular" evidence="1">
    <location>
        <begin position="39"/>
        <end position="50"/>
    </location>
</feature>
<feature type="transmembrane region" description="Helical; Name=3" evidence="1">
    <location>
        <begin position="51"/>
        <end position="72"/>
    </location>
</feature>
<feature type="topological domain" description="Cytoplasmic" evidence="1">
    <location>
        <begin position="73"/>
        <end position="91"/>
    </location>
</feature>
<feature type="transmembrane region" description="Helical; Name=4" evidence="1">
    <location>
        <begin position="92"/>
        <end position="114"/>
    </location>
</feature>
<feature type="topological domain" description="Extracellular" evidence="1">
    <location>
        <begin position="115"/>
        <end position="134"/>
    </location>
</feature>
<feature type="transmembrane region" description="Helical; Name=5" evidence="1">
    <location>
        <begin position="135"/>
        <end position="166"/>
    </location>
</feature>
<feature type="topological domain" description="Cytoplasmic" evidence="1">
    <location>
        <begin position="167"/>
        <end position="189"/>
    </location>
</feature>
<feature type="transmembrane region" description="Helical; Name=6" evidence="1">
    <location>
        <begin position="190"/>
        <end position="212"/>
    </location>
</feature>
<feature type="topological domain" description="Extracellular" evidence="1">
    <location>
        <begin position="213"/>
        <end position="227"/>
    </location>
</feature>
<feature type="disulfide bond" evidence="4">
    <location>
        <begin position="49"/>
        <end position="126"/>
    </location>
</feature>
<feature type="non-terminal residue">
    <location>
        <position position="1"/>
    </location>
</feature>
<feature type="non-terminal residue">
    <location>
        <position position="228"/>
    </location>
</feature>
<accession>P79291</accession>
<gene>
    <name type="primary">OPRD1</name>
</gene>
<keyword id="KW-1003">Cell membrane</keyword>
<keyword id="KW-1015">Disulfide bond</keyword>
<keyword id="KW-0297">G-protein coupled receptor</keyword>
<keyword id="KW-0449">Lipoprotein</keyword>
<keyword id="KW-0472">Membrane</keyword>
<keyword id="KW-0564">Palmitate</keyword>
<keyword id="KW-0675">Receptor</keyword>
<keyword id="KW-1185">Reference proteome</keyword>
<keyword id="KW-0807">Transducer</keyword>
<keyword id="KW-0812">Transmembrane</keyword>
<keyword id="KW-1133">Transmembrane helix</keyword>
<keyword id="KW-0832">Ubl conjugation</keyword>
<comment type="function">
    <text evidence="5">G-protein coupled receptor that functions as a receptor for endogenous enkephalins and for a subset of other opioids. Ligand binding causes a conformation change that triggers signaling via guanine nucleotide-binding proteins (G proteins) and modulates the activity of down-stream effectors, such as adenylate cyclase. Signaling leads to the inhibition of adenylate cyclase activity. Inhibits neurotransmitter release by reducing calcium ion currents and increasing potassium ion conductance. Plays a role in the perception of pain and in opiate-mediated analgesia. Plays a role in developing analgesic tolerance to morphine.</text>
</comment>
<comment type="subunit">
    <text evidence="2 3">May form homooligomers. Forms a heterodimer with OPRM1. Interacts with GPRASP1. Interacts with RTP4; the interaction promotes cell surface localization of the OPRD1-OPRM1 heterodimer.</text>
</comment>
<comment type="subcellular location">
    <subcellularLocation>
        <location>Cell membrane</location>
        <topology>Multi-pass membrane protein</topology>
    </subcellularLocation>
</comment>
<comment type="tissue specificity">
    <text evidence="5">Detected in myenteric plexus and smooth muscle (at protein level). Detected in brain and intestine.</text>
</comment>
<comment type="PTM">
    <text evidence="2">Ubiquitinated. A basal ubiquitination seems not to be related to degradation. Ubiquitination is increased upon formation of OPRM1:OPRD1 oligomers leading to proteasomal degradation; the ubiquitination is diminished by RTP4.</text>
</comment>
<comment type="similarity">
    <text evidence="4">Belongs to the G-protein coupled receptor 1 family.</text>
</comment>
<protein>
    <recommendedName>
        <fullName>Delta-type opioid receptor</fullName>
        <shortName>D-OR-1</shortName>
        <shortName>DOR-1</shortName>
    </recommendedName>
</protein>
<proteinExistence type="evidence at protein level"/>